<dbReference type="EMBL" id="BC099828">
    <property type="protein sequence ID" value="AAH99828.1"/>
    <property type="molecule type" value="mRNA"/>
</dbReference>
<dbReference type="RefSeq" id="NP_001034116.1">
    <property type="nucleotide sequence ID" value="NM_001039027.1"/>
</dbReference>
<dbReference type="SMR" id="Q499N3"/>
<dbReference type="FunCoup" id="Q499N3">
    <property type="interactions" value="2714"/>
</dbReference>
<dbReference type="STRING" id="10116.ENSRNOP00000016733"/>
<dbReference type="PhosphoSitePlus" id="Q499N3"/>
<dbReference type="jPOST" id="Q499N3"/>
<dbReference type="PaxDb" id="10116-ENSRNOP00000016733"/>
<dbReference type="GeneID" id="314617"/>
<dbReference type="KEGG" id="rno:314617"/>
<dbReference type="UCSC" id="RGD:1310646">
    <property type="organism name" value="rat"/>
</dbReference>
<dbReference type="AGR" id="RGD:1310646"/>
<dbReference type="CTD" id="57418"/>
<dbReference type="RGD" id="1310646">
    <property type="gene designation" value="Wdr18"/>
</dbReference>
<dbReference type="eggNOG" id="KOG0646">
    <property type="taxonomic scope" value="Eukaryota"/>
</dbReference>
<dbReference type="InParanoid" id="Q499N3"/>
<dbReference type="OrthoDB" id="756370at2759"/>
<dbReference type="PhylomeDB" id="Q499N3"/>
<dbReference type="Reactome" id="R-RNO-6791226">
    <property type="pathway name" value="Major pathway of rRNA processing in the nucleolus and cytosol"/>
</dbReference>
<dbReference type="PRO" id="PR:Q499N3"/>
<dbReference type="Proteomes" id="UP000002494">
    <property type="component" value="Unplaced"/>
</dbReference>
<dbReference type="GO" id="GO:0120293">
    <property type="term" value="C:dynein axonemal particle"/>
    <property type="evidence" value="ECO:0000250"/>
    <property type="project" value="UniProtKB"/>
</dbReference>
<dbReference type="GO" id="GO:0005656">
    <property type="term" value="C:nuclear pre-replicative complex"/>
    <property type="evidence" value="ECO:0000318"/>
    <property type="project" value="GO_Central"/>
</dbReference>
<dbReference type="GO" id="GO:0005730">
    <property type="term" value="C:nucleolus"/>
    <property type="evidence" value="ECO:0007669"/>
    <property type="project" value="UniProtKB-SubCell"/>
</dbReference>
<dbReference type="GO" id="GO:0120330">
    <property type="term" value="C:rixosome complex"/>
    <property type="evidence" value="ECO:0000318"/>
    <property type="project" value="GO_Central"/>
</dbReference>
<dbReference type="GO" id="GO:0006261">
    <property type="term" value="P:DNA-templated DNA replication"/>
    <property type="evidence" value="ECO:0000318"/>
    <property type="project" value="GO_Central"/>
</dbReference>
<dbReference type="GO" id="GO:0006364">
    <property type="term" value="P:rRNA processing"/>
    <property type="evidence" value="ECO:0000318"/>
    <property type="project" value="GO_Central"/>
</dbReference>
<dbReference type="FunFam" id="2.130.10.10:FF:000444">
    <property type="entry name" value="WD repeat domain 18"/>
    <property type="match status" value="1"/>
</dbReference>
<dbReference type="FunFam" id="2.130.10.10:FF:000467">
    <property type="entry name" value="WD repeat domain 18"/>
    <property type="match status" value="1"/>
</dbReference>
<dbReference type="Gene3D" id="2.130.10.10">
    <property type="entry name" value="YVTN repeat-like/Quinoprotein amine dehydrogenase"/>
    <property type="match status" value="2"/>
</dbReference>
<dbReference type="InterPro" id="IPR020472">
    <property type="entry name" value="G-protein_beta_WD-40_rep"/>
</dbReference>
<dbReference type="InterPro" id="IPR015943">
    <property type="entry name" value="WD40/YVTN_repeat-like_dom_sf"/>
</dbReference>
<dbReference type="InterPro" id="IPR019775">
    <property type="entry name" value="WD40_repeat_CS"/>
</dbReference>
<dbReference type="InterPro" id="IPR036322">
    <property type="entry name" value="WD40_repeat_dom_sf"/>
</dbReference>
<dbReference type="InterPro" id="IPR001680">
    <property type="entry name" value="WD40_rpt"/>
</dbReference>
<dbReference type="InterPro" id="IPR045227">
    <property type="entry name" value="WDR18/Ipi3/RID3"/>
</dbReference>
<dbReference type="InterPro" id="IPR026987">
    <property type="entry name" value="Wdr18_C_dom"/>
</dbReference>
<dbReference type="PANTHER" id="PTHR18763:SF0">
    <property type="entry name" value="WD REPEAT-CONTAINING PROTEIN 18"/>
    <property type="match status" value="1"/>
</dbReference>
<dbReference type="PANTHER" id="PTHR18763">
    <property type="entry name" value="WD-REPEAT PROTEIN 18"/>
    <property type="match status" value="1"/>
</dbReference>
<dbReference type="Pfam" id="PF00400">
    <property type="entry name" value="WD40"/>
    <property type="match status" value="3"/>
</dbReference>
<dbReference type="Pfam" id="PF14077">
    <property type="entry name" value="WD40_alt"/>
    <property type="match status" value="1"/>
</dbReference>
<dbReference type="PRINTS" id="PR00320">
    <property type="entry name" value="GPROTEINBRPT"/>
</dbReference>
<dbReference type="SMART" id="SM00320">
    <property type="entry name" value="WD40"/>
    <property type="match status" value="5"/>
</dbReference>
<dbReference type="SUPFAM" id="SSF50978">
    <property type="entry name" value="WD40 repeat-like"/>
    <property type="match status" value="1"/>
</dbReference>
<dbReference type="PROSITE" id="PS00678">
    <property type="entry name" value="WD_REPEATS_1"/>
    <property type="match status" value="1"/>
</dbReference>
<dbReference type="PROSITE" id="PS50082">
    <property type="entry name" value="WD_REPEATS_2"/>
    <property type="match status" value="2"/>
</dbReference>
<dbReference type="PROSITE" id="PS50294">
    <property type="entry name" value="WD_REPEATS_REGION"/>
    <property type="match status" value="1"/>
</dbReference>
<keyword id="KW-0963">Cytoplasm</keyword>
<keyword id="KW-0217">Developmental protein</keyword>
<keyword id="KW-0539">Nucleus</keyword>
<keyword id="KW-1185">Reference proteome</keyword>
<keyword id="KW-0677">Repeat</keyword>
<keyword id="KW-0853">WD repeat</keyword>
<name>WDR18_RAT</name>
<protein>
    <recommendedName>
        <fullName>WD repeat-containing protein 18</fullName>
    </recommendedName>
</protein>
<comment type="function">
    <text evidence="3 4">Functions as a component of the Five Friends of Methylated CHTOP (5FMC) complex; the 5FMC complex is recruited to ZNF148 by methylated CHTOP, leading to desumoylation of ZNF148 and subsequent transactivation of ZNF148 target genes (By similarity). Component of the PELP1 complex involved in the nucleolar steps of 28S rRNA maturation and the subsequent nucleoplasmic transit of the pre-60S ribosomal subunit (By similarity). May play a role during development (By similarity).</text>
</comment>
<comment type="subunit">
    <text evidence="4">Component of the 5FMC complex, at least composed of PELP1, LAS1L, TEX10, WDR18 and SENP3; the complex interacts with methylated CHTOP and ZNF148. Interacts with NOL9. Component of the PELP1 complex, composed of at least PELP1, TEX10 and WDR18. The complex interacts with pre-60S ribosome particles.</text>
</comment>
<comment type="subcellular location">
    <subcellularLocation>
        <location evidence="4">Nucleus</location>
        <location evidence="4">Nucleolus</location>
    </subcellularLocation>
    <subcellularLocation>
        <location evidence="2">Nucleus</location>
        <location evidence="2">Nucleoplasm</location>
    </subcellularLocation>
    <subcellularLocation>
        <location evidence="2">Cytoplasm</location>
    </subcellularLocation>
    <subcellularLocation>
        <location evidence="1">Dynein axonemal particle</location>
    </subcellularLocation>
    <text evidence="2">Mainly found in the nucleoplasm, with low levels detected in the cytoplasmic and chromatin fractions.</text>
</comment>
<comment type="similarity">
    <text evidence="5">Belongs to the WD repeat IPI3/WDR18 family.</text>
</comment>
<evidence type="ECO:0000250" key="1">
    <source>
        <dbReference type="UniProtKB" id="A0A1L8HX76"/>
    </source>
</evidence>
<evidence type="ECO:0000250" key="2">
    <source>
        <dbReference type="UniProtKB" id="Q4VBE8"/>
    </source>
</evidence>
<evidence type="ECO:0000250" key="3">
    <source>
        <dbReference type="UniProtKB" id="Q68EI0"/>
    </source>
</evidence>
<evidence type="ECO:0000250" key="4">
    <source>
        <dbReference type="UniProtKB" id="Q9BV38"/>
    </source>
</evidence>
<evidence type="ECO:0000305" key="5"/>
<proteinExistence type="evidence at transcript level"/>
<feature type="chain" id="PRO_0000233182" description="WD repeat-containing protein 18">
    <location>
        <begin position="1"/>
        <end position="431"/>
    </location>
</feature>
<feature type="repeat" description="WD 1">
    <location>
        <begin position="36"/>
        <end position="75"/>
    </location>
</feature>
<feature type="repeat" description="WD 2">
    <location>
        <begin position="78"/>
        <end position="116"/>
    </location>
</feature>
<feature type="repeat" description="WD 3">
    <location>
        <begin position="119"/>
        <end position="158"/>
    </location>
</feature>
<feature type="repeat" description="WD 4">
    <location>
        <begin position="170"/>
        <end position="211"/>
    </location>
</feature>
<feature type="repeat" description="WD 5">
    <location>
        <begin position="213"/>
        <end position="257"/>
    </location>
</feature>
<feature type="repeat" description="WD 6">
    <location>
        <begin position="267"/>
        <end position="306"/>
    </location>
</feature>
<organism>
    <name type="scientific">Rattus norvegicus</name>
    <name type="common">Rat</name>
    <dbReference type="NCBI Taxonomy" id="10116"/>
    <lineage>
        <taxon>Eukaryota</taxon>
        <taxon>Metazoa</taxon>
        <taxon>Chordata</taxon>
        <taxon>Craniata</taxon>
        <taxon>Vertebrata</taxon>
        <taxon>Euteleostomi</taxon>
        <taxon>Mammalia</taxon>
        <taxon>Eutheria</taxon>
        <taxon>Euarchontoglires</taxon>
        <taxon>Glires</taxon>
        <taxon>Rodentia</taxon>
        <taxon>Myomorpha</taxon>
        <taxon>Muroidea</taxon>
        <taxon>Muridae</taxon>
        <taxon>Murinae</taxon>
        <taxon>Rattus</taxon>
    </lineage>
</organism>
<accession>Q499N3</accession>
<gene>
    <name type="primary">Wdr18</name>
</gene>
<reference key="1">
    <citation type="journal article" date="2004" name="Genome Res.">
        <title>The status, quality, and expansion of the NIH full-length cDNA project: the Mammalian Gene Collection (MGC).</title>
        <authorList>
            <consortium name="The MGC Project Team"/>
        </authorList>
    </citation>
    <scope>NUCLEOTIDE SEQUENCE [LARGE SCALE MRNA]</scope>
    <source>
        <tissue>Prostate</tissue>
    </source>
</reference>
<sequence length="431" mass="47225">MAAPMEVVVCTDSAAPLWSCMVWELHSGANLLTYRGGQAGPRGLALLNGEYLLAAQQGKNYICAWELQRKDQLQQKIMCPGPVTCLTTAPNGLYVLAGIAESIYLWEVSTGNLLVILSRHYQDVSCLKFTGDGSHFVSAGKDCLVLAWSLCSVLQADPSRILAPRHVWSQHTLPITDLHCGFGGPMARVATASLDQTMKLWAISSGDLLLSVLFDMGITSVTMDLAEHYIFCGGSDGSIFQVDLCSRPGPREQSFQPEQNTGKVFKGHRNQVTCLSVSTDGSILLSGSHDESVRLWDVKSKQCVRTVPLKGPVTNAAITLAPPSMLNPEFRPSLPLPHFNKHLLGAEHGDEAQGGGLRLQLGLHLQGKEPSYLERLEQLQAALSGYLEKNMLGSQMLPVRVFELEEEVRSLRKINRDLFDFSTRIITRPSK</sequence>